<name>IOLG_CERS1</name>
<keyword id="KW-0520">NAD</keyword>
<keyword id="KW-0560">Oxidoreductase</keyword>
<organism>
    <name type="scientific">Cereibacter sphaeroides (strain ATCC 17029 / ATH 2.4.9)</name>
    <name type="common">Rhodobacter sphaeroides</name>
    <dbReference type="NCBI Taxonomy" id="349101"/>
    <lineage>
        <taxon>Bacteria</taxon>
        <taxon>Pseudomonadati</taxon>
        <taxon>Pseudomonadota</taxon>
        <taxon>Alphaproteobacteria</taxon>
        <taxon>Rhodobacterales</taxon>
        <taxon>Paracoccaceae</taxon>
        <taxon>Cereibacter</taxon>
    </lineage>
</organism>
<protein>
    <recommendedName>
        <fullName evidence="1">Inositol 2-dehydrogenase</fullName>
        <ecNumber evidence="1">1.1.1.18</ecNumber>
    </recommendedName>
    <alternativeName>
        <fullName evidence="1">Myo-inositol 2-dehydrogenase</fullName>
        <shortName evidence="1">MI 2-dehydrogenase</shortName>
    </alternativeName>
</protein>
<accession>A3PRX7</accession>
<gene>
    <name evidence="1" type="primary">iolG</name>
    <name type="ordered locus">Rsph17029_4015</name>
</gene>
<comment type="function">
    <text evidence="1">Involved in the oxidation of myo-inositol (MI) to 2-keto-myo-inositol (2KMI or 2-inosose).</text>
</comment>
<comment type="catalytic activity">
    <reaction evidence="1">
        <text>myo-inositol + NAD(+) = scyllo-inosose + NADH + H(+)</text>
        <dbReference type="Rhea" id="RHEA:16949"/>
        <dbReference type="ChEBI" id="CHEBI:15378"/>
        <dbReference type="ChEBI" id="CHEBI:17268"/>
        <dbReference type="ChEBI" id="CHEBI:17811"/>
        <dbReference type="ChEBI" id="CHEBI:57540"/>
        <dbReference type="ChEBI" id="CHEBI:57945"/>
        <dbReference type="EC" id="1.1.1.18"/>
    </reaction>
</comment>
<comment type="subunit">
    <text evidence="1">Homotetramer.</text>
</comment>
<comment type="similarity">
    <text evidence="1">Belongs to the Gfo/Idh/MocA family.</text>
</comment>
<feature type="chain" id="PRO_0000352587" description="Inositol 2-dehydrogenase">
    <location>
        <begin position="1"/>
        <end position="334"/>
    </location>
</feature>
<reference key="1">
    <citation type="submission" date="2007-02" db="EMBL/GenBank/DDBJ databases">
        <title>Complete sequence of chromosome 2 of Rhodobacter sphaeroides ATCC 17029.</title>
        <authorList>
            <person name="Copeland A."/>
            <person name="Lucas S."/>
            <person name="Lapidus A."/>
            <person name="Barry K."/>
            <person name="Detter J.C."/>
            <person name="Glavina del Rio T."/>
            <person name="Hammon N."/>
            <person name="Israni S."/>
            <person name="Dalin E."/>
            <person name="Tice H."/>
            <person name="Pitluck S."/>
            <person name="Kiss H."/>
            <person name="Brettin T."/>
            <person name="Bruce D."/>
            <person name="Han C."/>
            <person name="Tapia R."/>
            <person name="Gilna P."/>
            <person name="Schmutz J."/>
            <person name="Larimer F."/>
            <person name="Land M."/>
            <person name="Hauser L."/>
            <person name="Kyrpides N."/>
            <person name="Mikhailova N."/>
            <person name="Richardson P."/>
            <person name="Mackenzie C."/>
            <person name="Choudhary M."/>
            <person name="Donohue T.J."/>
            <person name="Kaplan S."/>
        </authorList>
    </citation>
    <scope>NUCLEOTIDE SEQUENCE [LARGE SCALE GENOMIC DNA]</scope>
    <source>
        <strain>ATCC 17029 / ATH 2.4.9</strain>
    </source>
</reference>
<sequence length="334" mass="36104">MTLRIGIIGTGAIGTDHARRINRVLSGAEVTAVTDVNRDNAEACVAGVAPGAQILGSAEEVIAASDAVLVCSWGAAHEAQVLAAIAAGKPCFCEKPLATEAYGARRIVEAEGAMGRRLVQVGFMRRYDRGYIALKETVRTRLGPPLMIHAAHRNPTVPGRYRTPMAIHDTLIHEIDVLRWLLDDEYVSAQVIFPRATRHTHAGLRDPQIVLLETAKGVRIDVEIFVNCRYGYDIQCEVVGEEGTARLPEPMAIPTRLGAMFGQPILMDWKDRFIDSYDVELQDFLKAAAQGTAAGPSAWDGYAAAITADVCVQAQERPGAILPVTLPARPALYA</sequence>
<proteinExistence type="inferred from homology"/>
<dbReference type="EC" id="1.1.1.18" evidence="1"/>
<dbReference type="EMBL" id="CP000578">
    <property type="protein sequence ID" value="ABN79093.1"/>
    <property type="molecule type" value="Genomic_DNA"/>
</dbReference>
<dbReference type="RefSeq" id="WP_011842816.1">
    <property type="nucleotide sequence ID" value="NC_009050.1"/>
</dbReference>
<dbReference type="SMR" id="A3PRX7"/>
<dbReference type="KEGG" id="rsh:Rsph17029_4015"/>
<dbReference type="HOGENOM" id="CLU_023194_0_1_5"/>
<dbReference type="GO" id="GO:0050112">
    <property type="term" value="F:inositol 2-dehydrogenase (NAD+) activity"/>
    <property type="evidence" value="ECO:0007669"/>
    <property type="project" value="UniProtKB-UniRule"/>
</dbReference>
<dbReference type="GO" id="GO:0000166">
    <property type="term" value="F:nucleotide binding"/>
    <property type="evidence" value="ECO:0007669"/>
    <property type="project" value="InterPro"/>
</dbReference>
<dbReference type="GO" id="GO:0019310">
    <property type="term" value="P:inositol catabolic process"/>
    <property type="evidence" value="ECO:0007669"/>
    <property type="project" value="UniProtKB-UniRule"/>
</dbReference>
<dbReference type="Gene3D" id="3.30.360.10">
    <property type="entry name" value="Dihydrodipicolinate Reductase, domain 2"/>
    <property type="match status" value="1"/>
</dbReference>
<dbReference type="Gene3D" id="3.40.50.720">
    <property type="entry name" value="NAD(P)-binding Rossmann-like Domain"/>
    <property type="match status" value="1"/>
</dbReference>
<dbReference type="HAMAP" id="MF_01671">
    <property type="entry name" value="IolG"/>
    <property type="match status" value="1"/>
</dbReference>
<dbReference type="InterPro" id="IPR050424">
    <property type="entry name" value="Gfo-Idh-MocA_inositol_DH"/>
</dbReference>
<dbReference type="InterPro" id="IPR004104">
    <property type="entry name" value="Gfo/Idh/MocA-like_OxRdtase_C"/>
</dbReference>
<dbReference type="InterPro" id="IPR000683">
    <property type="entry name" value="Gfo/Idh/MocA-like_OxRdtase_N"/>
</dbReference>
<dbReference type="InterPro" id="IPR023794">
    <property type="entry name" value="MI/DCI_dehydrogenase"/>
</dbReference>
<dbReference type="InterPro" id="IPR036291">
    <property type="entry name" value="NAD(P)-bd_dom_sf"/>
</dbReference>
<dbReference type="PANTHER" id="PTHR43593">
    <property type="match status" value="1"/>
</dbReference>
<dbReference type="PANTHER" id="PTHR43593:SF1">
    <property type="entry name" value="INOSITOL 2-DEHYDROGENASE"/>
    <property type="match status" value="1"/>
</dbReference>
<dbReference type="Pfam" id="PF01408">
    <property type="entry name" value="GFO_IDH_MocA"/>
    <property type="match status" value="1"/>
</dbReference>
<dbReference type="Pfam" id="PF02894">
    <property type="entry name" value="GFO_IDH_MocA_C"/>
    <property type="match status" value="1"/>
</dbReference>
<dbReference type="SUPFAM" id="SSF55347">
    <property type="entry name" value="Glyceraldehyde-3-phosphate dehydrogenase-like, C-terminal domain"/>
    <property type="match status" value="1"/>
</dbReference>
<dbReference type="SUPFAM" id="SSF51735">
    <property type="entry name" value="NAD(P)-binding Rossmann-fold domains"/>
    <property type="match status" value="1"/>
</dbReference>
<evidence type="ECO:0000255" key="1">
    <source>
        <dbReference type="HAMAP-Rule" id="MF_01671"/>
    </source>
</evidence>